<reference key="1">
    <citation type="submission" date="2006-03" db="EMBL/GenBank/DDBJ databases">
        <title>Complete sequence of Rhodopseudomonas palustris BisB5.</title>
        <authorList>
            <consortium name="US DOE Joint Genome Institute"/>
            <person name="Copeland A."/>
            <person name="Lucas S."/>
            <person name="Lapidus A."/>
            <person name="Barry K."/>
            <person name="Detter J.C."/>
            <person name="Glavina del Rio T."/>
            <person name="Hammon N."/>
            <person name="Israni S."/>
            <person name="Dalin E."/>
            <person name="Tice H."/>
            <person name="Pitluck S."/>
            <person name="Chain P."/>
            <person name="Malfatti S."/>
            <person name="Shin M."/>
            <person name="Vergez L."/>
            <person name="Schmutz J."/>
            <person name="Larimer F."/>
            <person name="Land M."/>
            <person name="Hauser L."/>
            <person name="Pelletier D.A."/>
            <person name="Kyrpides N."/>
            <person name="Lykidis A."/>
            <person name="Oda Y."/>
            <person name="Harwood C.S."/>
            <person name="Richardson P."/>
        </authorList>
    </citation>
    <scope>NUCLEOTIDE SEQUENCE [LARGE SCALE GENOMIC DNA]</scope>
    <source>
        <strain>BisB5</strain>
    </source>
</reference>
<gene>
    <name evidence="1" type="primary">purA</name>
    <name type="ordered locus">RPD_3894</name>
</gene>
<accession>Q131X4</accession>
<evidence type="ECO:0000255" key="1">
    <source>
        <dbReference type="HAMAP-Rule" id="MF_00011"/>
    </source>
</evidence>
<name>PURA_RHOPS</name>
<sequence length="430" mass="46748">MANVVVVGAQWGDEGKGKIVDWLSEQADIVARFQGGHNAGHTLVINGETYKLALLPSGVLRPSKLAVIGNGVVFDPQAFLDEVERLTKQGVAISPENLRVAENVTLILPLHRELDALRENASKATSIGTTQRGIGPAYEDKVGRRAIRLMDLADIDTLPHKIERLLTHHNALRRGLGLSEFEAGAILKELTALAPRLLPYAETVWRLLDIKRREGKRILFEGAQGALLDVDHGTYPYVTSSNTVAAQAATGTGMGPGSVGYVLGICKAYTTRVGQGPFPTELDNEIGRKIGERGREFGTNTGRPRRCGWFDAVLVRQTVRTCGIHGLALTKLDILDGFDSIEVCVGYMLDGKEIDHLPAGEGAQARVVPIYETIEGWKEPTANARSWADLPAQAVKYVRRVEELVGCPIALLSTSPEREDTILVQNPFEA</sequence>
<feature type="chain" id="PRO_1000000907" description="Adenylosuccinate synthetase">
    <location>
        <begin position="1"/>
        <end position="430"/>
    </location>
</feature>
<feature type="active site" description="Proton acceptor" evidence="1">
    <location>
        <position position="13"/>
    </location>
</feature>
<feature type="active site" description="Proton donor" evidence="1">
    <location>
        <position position="41"/>
    </location>
</feature>
<feature type="binding site" evidence="1">
    <location>
        <begin position="12"/>
        <end position="18"/>
    </location>
    <ligand>
        <name>GTP</name>
        <dbReference type="ChEBI" id="CHEBI:37565"/>
    </ligand>
</feature>
<feature type="binding site" description="in other chain" evidence="1">
    <location>
        <begin position="13"/>
        <end position="16"/>
    </location>
    <ligand>
        <name>IMP</name>
        <dbReference type="ChEBI" id="CHEBI:58053"/>
        <note>ligand shared between dimeric partners</note>
    </ligand>
</feature>
<feature type="binding site" evidence="1">
    <location>
        <position position="13"/>
    </location>
    <ligand>
        <name>Mg(2+)</name>
        <dbReference type="ChEBI" id="CHEBI:18420"/>
    </ligand>
</feature>
<feature type="binding site" description="in other chain" evidence="1">
    <location>
        <begin position="38"/>
        <end position="41"/>
    </location>
    <ligand>
        <name>IMP</name>
        <dbReference type="ChEBI" id="CHEBI:58053"/>
        <note>ligand shared between dimeric partners</note>
    </ligand>
</feature>
<feature type="binding site" evidence="1">
    <location>
        <begin position="40"/>
        <end position="42"/>
    </location>
    <ligand>
        <name>GTP</name>
        <dbReference type="ChEBI" id="CHEBI:37565"/>
    </ligand>
</feature>
<feature type="binding site" evidence="1">
    <location>
        <position position="40"/>
    </location>
    <ligand>
        <name>Mg(2+)</name>
        <dbReference type="ChEBI" id="CHEBI:18420"/>
    </ligand>
</feature>
<feature type="binding site" description="in other chain" evidence="1">
    <location>
        <position position="130"/>
    </location>
    <ligand>
        <name>IMP</name>
        <dbReference type="ChEBI" id="CHEBI:58053"/>
        <note>ligand shared between dimeric partners</note>
    </ligand>
</feature>
<feature type="binding site" evidence="1">
    <location>
        <position position="144"/>
    </location>
    <ligand>
        <name>IMP</name>
        <dbReference type="ChEBI" id="CHEBI:58053"/>
        <note>ligand shared between dimeric partners</note>
    </ligand>
</feature>
<feature type="binding site" description="in other chain" evidence="1">
    <location>
        <position position="224"/>
    </location>
    <ligand>
        <name>IMP</name>
        <dbReference type="ChEBI" id="CHEBI:58053"/>
        <note>ligand shared between dimeric partners</note>
    </ligand>
</feature>
<feature type="binding site" description="in other chain" evidence="1">
    <location>
        <position position="239"/>
    </location>
    <ligand>
        <name>IMP</name>
        <dbReference type="ChEBI" id="CHEBI:58053"/>
        <note>ligand shared between dimeric partners</note>
    </ligand>
</feature>
<feature type="binding site" evidence="1">
    <location>
        <begin position="299"/>
        <end position="305"/>
    </location>
    <ligand>
        <name>substrate</name>
    </ligand>
</feature>
<feature type="binding site" description="in other chain" evidence="1">
    <location>
        <position position="303"/>
    </location>
    <ligand>
        <name>IMP</name>
        <dbReference type="ChEBI" id="CHEBI:58053"/>
        <note>ligand shared between dimeric partners</note>
    </ligand>
</feature>
<feature type="binding site" evidence="1">
    <location>
        <position position="305"/>
    </location>
    <ligand>
        <name>GTP</name>
        <dbReference type="ChEBI" id="CHEBI:37565"/>
    </ligand>
</feature>
<feature type="binding site" evidence="1">
    <location>
        <begin position="331"/>
        <end position="333"/>
    </location>
    <ligand>
        <name>GTP</name>
        <dbReference type="ChEBI" id="CHEBI:37565"/>
    </ligand>
</feature>
<feature type="binding site" evidence="1">
    <location>
        <begin position="413"/>
        <end position="415"/>
    </location>
    <ligand>
        <name>GTP</name>
        <dbReference type="ChEBI" id="CHEBI:37565"/>
    </ligand>
</feature>
<dbReference type="EC" id="6.3.4.4" evidence="1"/>
<dbReference type="EMBL" id="CP000283">
    <property type="protein sequence ID" value="ABE41115.1"/>
    <property type="molecule type" value="Genomic_DNA"/>
</dbReference>
<dbReference type="SMR" id="Q131X4"/>
<dbReference type="STRING" id="316057.RPD_3894"/>
<dbReference type="KEGG" id="rpd:RPD_3894"/>
<dbReference type="eggNOG" id="COG0104">
    <property type="taxonomic scope" value="Bacteria"/>
</dbReference>
<dbReference type="HOGENOM" id="CLU_029848_0_0_5"/>
<dbReference type="BioCyc" id="RPAL316057:RPD_RS19560-MONOMER"/>
<dbReference type="UniPathway" id="UPA00075">
    <property type="reaction ID" value="UER00335"/>
</dbReference>
<dbReference type="Proteomes" id="UP000001818">
    <property type="component" value="Chromosome"/>
</dbReference>
<dbReference type="GO" id="GO:0005737">
    <property type="term" value="C:cytoplasm"/>
    <property type="evidence" value="ECO:0007669"/>
    <property type="project" value="UniProtKB-SubCell"/>
</dbReference>
<dbReference type="GO" id="GO:0004019">
    <property type="term" value="F:adenylosuccinate synthase activity"/>
    <property type="evidence" value="ECO:0007669"/>
    <property type="project" value="UniProtKB-UniRule"/>
</dbReference>
<dbReference type="GO" id="GO:0005525">
    <property type="term" value="F:GTP binding"/>
    <property type="evidence" value="ECO:0007669"/>
    <property type="project" value="UniProtKB-UniRule"/>
</dbReference>
<dbReference type="GO" id="GO:0000287">
    <property type="term" value="F:magnesium ion binding"/>
    <property type="evidence" value="ECO:0007669"/>
    <property type="project" value="UniProtKB-UniRule"/>
</dbReference>
<dbReference type="GO" id="GO:0044208">
    <property type="term" value="P:'de novo' AMP biosynthetic process"/>
    <property type="evidence" value="ECO:0007669"/>
    <property type="project" value="UniProtKB-UniRule"/>
</dbReference>
<dbReference type="GO" id="GO:0046040">
    <property type="term" value="P:IMP metabolic process"/>
    <property type="evidence" value="ECO:0007669"/>
    <property type="project" value="TreeGrafter"/>
</dbReference>
<dbReference type="CDD" id="cd03108">
    <property type="entry name" value="AdSS"/>
    <property type="match status" value="1"/>
</dbReference>
<dbReference type="FunFam" id="1.10.300.10:FF:000001">
    <property type="entry name" value="Adenylosuccinate synthetase"/>
    <property type="match status" value="1"/>
</dbReference>
<dbReference type="FunFam" id="3.90.170.10:FF:000001">
    <property type="entry name" value="Adenylosuccinate synthetase"/>
    <property type="match status" value="1"/>
</dbReference>
<dbReference type="Gene3D" id="3.40.440.10">
    <property type="entry name" value="Adenylosuccinate Synthetase, subunit A, domain 1"/>
    <property type="match status" value="1"/>
</dbReference>
<dbReference type="Gene3D" id="1.10.300.10">
    <property type="entry name" value="Adenylosuccinate Synthetase, subunit A, domain 2"/>
    <property type="match status" value="1"/>
</dbReference>
<dbReference type="Gene3D" id="3.90.170.10">
    <property type="entry name" value="Adenylosuccinate Synthetase, subunit A, domain 3"/>
    <property type="match status" value="1"/>
</dbReference>
<dbReference type="HAMAP" id="MF_00011">
    <property type="entry name" value="Adenylosucc_synth"/>
    <property type="match status" value="1"/>
</dbReference>
<dbReference type="InterPro" id="IPR018220">
    <property type="entry name" value="Adenylosuccin_syn_GTP-bd"/>
</dbReference>
<dbReference type="InterPro" id="IPR033128">
    <property type="entry name" value="Adenylosuccin_syn_Lys_AS"/>
</dbReference>
<dbReference type="InterPro" id="IPR042109">
    <property type="entry name" value="Adenylosuccinate_synth_dom1"/>
</dbReference>
<dbReference type="InterPro" id="IPR042110">
    <property type="entry name" value="Adenylosuccinate_synth_dom2"/>
</dbReference>
<dbReference type="InterPro" id="IPR042111">
    <property type="entry name" value="Adenylosuccinate_synth_dom3"/>
</dbReference>
<dbReference type="InterPro" id="IPR001114">
    <property type="entry name" value="Adenylosuccinate_synthetase"/>
</dbReference>
<dbReference type="InterPro" id="IPR027417">
    <property type="entry name" value="P-loop_NTPase"/>
</dbReference>
<dbReference type="NCBIfam" id="NF002223">
    <property type="entry name" value="PRK01117.1"/>
    <property type="match status" value="1"/>
</dbReference>
<dbReference type="NCBIfam" id="TIGR00184">
    <property type="entry name" value="purA"/>
    <property type="match status" value="1"/>
</dbReference>
<dbReference type="PANTHER" id="PTHR11846">
    <property type="entry name" value="ADENYLOSUCCINATE SYNTHETASE"/>
    <property type="match status" value="1"/>
</dbReference>
<dbReference type="PANTHER" id="PTHR11846:SF0">
    <property type="entry name" value="ADENYLOSUCCINATE SYNTHETASE"/>
    <property type="match status" value="1"/>
</dbReference>
<dbReference type="Pfam" id="PF00709">
    <property type="entry name" value="Adenylsucc_synt"/>
    <property type="match status" value="1"/>
</dbReference>
<dbReference type="SMART" id="SM00788">
    <property type="entry name" value="Adenylsucc_synt"/>
    <property type="match status" value="1"/>
</dbReference>
<dbReference type="SUPFAM" id="SSF52540">
    <property type="entry name" value="P-loop containing nucleoside triphosphate hydrolases"/>
    <property type="match status" value="1"/>
</dbReference>
<dbReference type="PROSITE" id="PS01266">
    <property type="entry name" value="ADENYLOSUCCIN_SYN_1"/>
    <property type="match status" value="1"/>
</dbReference>
<dbReference type="PROSITE" id="PS00513">
    <property type="entry name" value="ADENYLOSUCCIN_SYN_2"/>
    <property type="match status" value="1"/>
</dbReference>
<organism>
    <name type="scientific">Rhodopseudomonas palustris (strain BisB5)</name>
    <dbReference type="NCBI Taxonomy" id="316057"/>
    <lineage>
        <taxon>Bacteria</taxon>
        <taxon>Pseudomonadati</taxon>
        <taxon>Pseudomonadota</taxon>
        <taxon>Alphaproteobacteria</taxon>
        <taxon>Hyphomicrobiales</taxon>
        <taxon>Nitrobacteraceae</taxon>
        <taxon>Rhodopseudomonas</taxon>
    </lineage>
</organism>
<comment type="function">
    <text evidence="1">Plays an important role in the de novo pathway of purine nucleotide biosynthesis. Catalyzes the first committed step in the biosynthesis of AMP from IMP.</text>
</comment>
<comment type="catalytic activity">
    <reaction evidence="1">
        <text>IMP + L-aspartate + GTP = N(6)-(1,2-dicarboxyethyl)-AMP + GDP + phosphate + 2 H(+)</text>
        <dbReference type="Rhea" id="RHEA:15753"/>
        <dbReference type="ChEBI" id="CHEBI:15378"/>
        <dbReference type="ChEBI" id="CHEBI:29991"/>
        <dbReference type="ChEBI" id="CHEBI:37565"/>
        <dbReference type="ChEBI" id="CHEBI:43474"/>
        <dbReference type="ChEBI" id="CHEBI:57567"/>
        <dbReference type="ChEBI" id="CHEBI:58053"/>
        <dbReference type="ChEBI" id="CHEBI:58189"/>
        <dbReference type="EC" id="6.3.4.4"/>
    </reaction>
</comment>
<comment type="cofactor">
    <cofactor evidence="1">
        <name>Mg(2+)</name>
        <dbReference type="ChEBI" id="CHEBI:18420"/>
    </cofactor>
    <text evidence="1">Binds 1 Mg(2+) ion per subunit.</text>
</comment>
<comment type="pathway">
    <text evidence="1">Purine metabolism; AMP biosynthesis via de novo pathway; AMP from IMP: step 1/2.</text>
</comment>
<comment type="subunit">
    <text evidence="1">Homodimer.</text>
</comment>
<comment type="subcellular location">
    <subcellularLocation>
        <location evidence="1">Cytoplasm</location>
    </subcellularLocation>
</comment>
<comment type="similarity">
    <text evidence="1">Belongs to the adenylosuccinate synthetase family.</text>
</comment>
<protein>
    <recommendedName>
        <fullName evidence="1">Adenylosuccinate synthetase</fullName>
        <shortName evidence="1">AMPSase</shortName>
        <shortName evidence="1">AdSS</shortName>
        <ecNumber evidence="1">6.3.4.4</ecNumber>
    </recommendedName>
    <alternativeName>
        <fullName evidence="1">IMP--aspartate ligase</fullName>
    </alternativeName>
</protein>
<keyword id="KW-0963">Cytoplasm</keyword>
<keyword id="KW-0342">GTP-binding</keyword>
<keyword id="KW-0436">Ligase</keyword>
<keyword id="KW-0460">Magnesium</keyword>
<keyword id="KW-0479">Metal-binding</keyword>
<keyword id="KW-0547">Nucleotide-binding</keyword>
<keyword id="KW-0658">Purine biosynthesis</keyword>
<proteinExistence type="inferred from homology"/>